<accession>B7V8A3</accession>
<feature type="chain" id="PRO_1000127762" description="Putative 3-methyladenine DNA glycosylase">
    <location>
        <begin position="1"/>
        <end position="239"/>
    </location>
</feature>
<name>3MGH_PSEA8</name>
<dbReference type="EC" id="3.2.2.-" evidence="1"/>
<dbReference type="EMBL" id="FM209186">
    <property type="protein sequence ID" value="CAW25693.1"/>
    <property type="molecule type" value="Genomic_DNA"/>
</dbReference>
<dbReference type="RefSeq" id="WP_003100299.1">
    <property type="nucleotide sequence ID" value="NC_011770.1"/>
</dbReference>
<dbReference type="SMR" id="B7V8A3"/>
<dbReference type="KEGG" id="pag:PLES_09661"/>
<dbReference type="HOGENOM" id="CLU_104187_0_0_6"/>
<dbReference type="GO" id="GO:0003905">
    <property type="term" value="F:alkylbase DNA N-glycosylase activity"/>
    <property type="evidence" value="ECO:0007669"/>
    <property type="project" value="InterPro"/>
</dbReference>
<dbReference type="GO" id="GO:0003677">
    <property type="term" value="F:DNA binding"/>
    <property type="evidence" value="ECO:0007669"/>
    <property type="project" value="InterPro"/>
</dbReference>
<dbReference type="GO" id="GO:0006284">
    <property type="term" value="P:base-excision repair"/>
    <property type="evidence" value="ECO:0007669"/>
    <property type="project" value="InterPro"/>
</dbReference>
<dbReference type="CDD" id="cd00540">
    <property type="entry name" value="AAG"/>
    <property type="match status" value="1"/>
</dbReference>
<dbReference type="FunFam" id="3.10.300.10:FF:000003">
    <property type="entry name" value="Putative 3-methyladenine DNA glycosylase"/>
    <property type="match status" value="1"/>
</dbReference>
<dbReference type="Gene3D" id="3.10.300.10">
    <property type="entry name" value="Methylpurine-DNA glycosylase (MPG)"/>
    <property type="match status" value="1"/>
</dbReference>
<dbReference type="HAMAP" id="MF_00527">
    <property type="entry name" value="3MGH"/>
    <property type="match status" value="1"/>
</dbReference>
<dbReference type="InterPro" id="IPR011034">
    <property type="entry name" value="Formyl_transferase-like_C_sf"/>
</dbReference>
<dbReference type="InterPro" id="IPR003180">
    <property type="entry name" value="MPG"/>
</dbReference>
<dbReference type="InterPro" id="IPR036995">
    <property type="entry name" value="MPG_sf"/>
</dbReference>
<dbReference type="NCBIfam" id="NF002005">
    <property type="entry name" value="PRK00802.1-5"/>
    <property type="match status" value="1"/>
</dbReference>
<dbReference type="PANTHER" id="PTHR10429">
    <property type="entry name" value="DNA-3-METHYLADENINE GLYCOSYLASE"/>
    <property type="match status" value="1"/>
</dbReference>
<dbReference type="PANTHER" id="PTHR10429:SF0">
    <property type="entry name" value="DNA-3-METHYLADENINE GLYCOSYLASE"/>
    <property type="match status" value="1"/>
</dbReference>
<dbReference type="Pfam" id="PF02245">
    <property type="entry name" value="Pur_DNA_glyco"/>
    <property type="match status" value="1"/>
</dbReference>
<dbReference type="SUPFAM" id="SSF50486">
    <property type="entry name" value="FMT C-terminal domain-like"/>
    <property type="match status" value="1"/>
</dbReference>
<protein>
    <recommendedName>
        <fullName evidence="1">Putative 3-methyladenine DNA glycosylase</fullName>
        <ecNumber evidence="1">3.2.2.-</ecNumber>
    </recommendedName>
</protein>
<sequence>MSRDPILSLPWPDARPLPDTFFDRDALLVARELLGKVIRHRQGNLWLAARIIETEAYYLEEKGSHASLGYTEKRKALFLDGGHIYMYYARGGDSLNFSAGGPGNAVLIKSGHPWLDRISDHTALERMQSLNPDSQGRPREIGRLCAGQTLLCKAMGLKVPEWDAQRFDPQRLFVDDVGERPSQVIQAARLGIPKGRDEHLPYRFVDATFAAFCTRNPLRRGQVAGRDYHLLGHQDPHLQ</sequence>
<organism>
    <name type="scientific">Pseudomonas aeruginosa (strain LESB58)</name>
    <dbReference type="NCBI Taxonomy" id="557722"/>
    <lineage>
        <taxon>Bacteria</taxon>
        <taxon>Pseudomonadati</taxon>
        <taxon>Pseudomonadota</taxon>
        <taxon>Gammaproteobacteria</taxon>
        <taxon>Pseudomonadales</taxon>
        <taxon>Pseudomonadaceae</taxon>
        <taxon>Pseudomonas</taxon>
    </lineage>
</organism>
<proteinExistence type="inferred from homology"/>
<evidence type="ECO:0000255" key="1">
    <source>
        <dbReference type="HAMAP-Rule" id="MF_00527"/>
    </source>
</evidence>
<gene>
    <name type="ordered locus">PLES_09661</name>
</gene>
<reference key="1">
    <citation type="journal article" date="2009" name="Genome Res.">
        <title>Newly introduced genomic prophage islands are critical determinants of in vivo competitiveness in the Liverpool epidemic strain of Pseudomonas aeruginosa.</title>
        <authorList>
            <person name="Winstanley C."/>
            <person name="Langille M.G.I."/>
            <person name="Fothergill J.L."/>
            <person name="Kukavica-Ibrulj I."/>
            <person name="Paradis-Bleau C."/>
            <person name="Sanschagrin F."/>
            <person name="Thomson N.R."/>
            <person name="Winsor G.L."/>
            <person name="Quail M.A."/>
            <person name="Lennard N."/>
            <person name="Bignell A."/>
            <person name="Clarke L."/>
            <person name="Seeger K."/>
            <person name="Saunders D."/>
            <person name="Harris D."/>
            <person name="Parkhill J."/>
            <person name="Hancock R.E.W."/>
            <person name="Brinkman F.S.L."/>
            <person name="Levesque R.C."/>
        </authorList>
    </citation>
    <scope>NUCLEOTIDE SEQUENCE [LARGE SCALE GENOMIC DNA]</scope>
    <source>
        <strain>LESB58</strain>
    </source>
</reference>
<keyword id="KW-0227">DNA damage</keyword>
<keyword id="KW-0234">DNA repair</keyword>
<keyword id="KW-0378">Hydrolase</keyword>
<comment type="similarity">
    <text evidence="1">Belongs to the DNA glycosylase MPG family.</text>
</comment>